<proteinExistence type="evidence at transcript level"/>
<gene>
    <name type="primary">rho</name>
</gene>
<organism>
    <name type="scientific">Sargocentron xantherythrum</name>
    <name type="common">Hawaiian squirrelfish</name>
    <name type="synonym">Holocentrus xantherythrus</name>
    <dbReference type="NCBI Taxonomy" id="47708"/>
    <lineage>
        <taxon>Eukaryota</taxon>
        <taxon>Metazoa</taxon>
        <taxon>Chordata</taxon>
        <taxon>Craniata</taxon>
        <taxon>Vertebrata</taxon>
        <taxon>Euteleostomi</taxon>
        <taxon>Actinopterygii</taxon>
        <taxon>Neopterygii</taxon>
        <taxon>Teleostei</taxon>
        <taxon>Neoteleostei</taxon>
        <taxon>Acanthomorphata</taxon>
        <taxon>Holocentriformes</taxon>
        <taxon>Holocentridae</taxon>
        <taxon>Sargocentron</taxon>
    </lineage>
</organism>
<comment type="function">
    <text evidence="1 2 3">Photoreceptor required for image-forming vision at low light intensity. While most salt water fish species use retinal as chromophore, most freshwater fish use 3-dehydroretinal, or a mixture of retinal and 3-dehydroretinal (By similarity). Light-induced isomerization of 11-cis to all-trans retinal triggers a conformational change that activates signaling via G-proteins. Subsequent receptor phosphorylation mediates displacement of the bound G-protein alpha subunit by arrestin and terminates signaling (By similarity).</text>
</comment>
<comment type="subcellular location">
    <subcellularLocation>
        <location evidence="2">Membrane</location>
        <topology evidence="2">Multi-pass membrane protein</topology>
    </subcellularLocation>
    <subcellularLocation>
        <location evidence="4">Cell projection</location>
        <location evidence="4">Cilium</location>
        <location evidence="4">Photoreceptor outer segment</location>
    </subcellularLocation>
    <text evidence="2">Synthesized in the inner segment (IS) of rod photoreceptor cells before vectorial transport to disk membranes in the rod outer segment (OS) photosensory cilia.</text>
</comment>
<comment type="PTM">
    <text evidence="1">Phosphorylated on some or all of the serine and threonine residues present in the C-terminal region.</text>
</comment>
<comment type="PTM">
    <text evidence="1">Contains one covalently linked retinal chromophore.</text>
</comment>
<comment type="similarity">
    <text evidence="6">Belongs to the G-protein coupled receptor 1 family. Opsin subfamily.</text>
</comment>
<evidence type="ECO:0000250" key="1">
    <source>
        <dbReference type="UniProtKB" id="P02699"/>
    </source>
</evidence>
<evidence type="ECO:0000250" key="2">
    <source>
        <dbReference type="UniProtKB" id="P08100"/>
    </source>
</evidence>
<evidence type="ECO:0000250" key="3">
    <source>
        <dbReference type="UniProtKB" id="P32309"/>
    </source>
</evidence>
<evidence type="ECO:0000250" key="4">
    <source>
        <dbReference type="UniProtKB" id="P35359"/>
    </source>
</evidence>
<evidence type="ECO:0000255" key="5"/>
<evidence type="ECO:0000255" key="6">
    <source>
        <dbReference type="PROSITE-ProRule" id="PRU00521"/>
    </source>
</evidence>
<evidence type="ECO:0000256" key="7">
    <source>
        <dbReference type="SAM" id="MobiDB-lite"/>
    </source>
</evidence>
<evidence type="ECO:0000305" key="8"/>
<feature type="chain" id="PRO_0000197717" description="Rhodopsin">
    <location>
        <begin position="1" status="less than"/>
        <end position="348"/>
    </location>
</feature>
<feature type="topological domain" description="Extracellular" evidence="8">
    <location>
        <begin position="1"/>
        <end position="33"/>
    </location>
</feature>
<feature type="transmembrane region" description="Helical; Name=1" evidence="1">
    <location>
        <begin position="34"/>
        <end position="58"/>
    </location>
</feature>
<feature type="topological domain" description="Cytoplasmic" evidence="8">
    <location>
        <begin position="59"/>
        <end position="70"/>
    </location>
</feature>
<feature type="transmembrane region" description="Helical; Name=2" evidence="1">
    <location>
        <begin position="71"/>
        <end position="93"/>
    </location>
</feature>
<feature type="topological domain" description="Extracellular" evidence="8">
    <location>
        <begin position="94"/>
        <end position="107"/>
    </location>
</feature>
<feature type="transmembrane region" description="Helical; Name=3" evidence="1">
    <location>
        <begin position="108"/>
        <end position="130"/>
    </location>
</feature>
<feature type="topological domain" description="Cytoplasmic" evidence="8">
    <location>
        <begin position="131"/>
        <end position="149"/>
    </location>
</feature>
<feature type="transmembrane region" description="Helical; Name=4" evidence="1">
    <location>
        <begin position="150"/>
        <end position="170"/>
    </location>
</feature>
<feature type="topological domain" description="Extracellular" evidence="8">
    <location>
        <begin position="171"/>
        <end position="199"/>
    </location>
</feature>
<feature type="transmembrane region" description="Helical; Name=5" evidence="1">
    <location>
        <begin position="200"/>
        <end position="221"/>
    </location>
</feature>
<feature type="topological domain" description="Cytoplasmic" evidence="8">
    <location>
        <begin position="222"/>
        <end position="249"/>
    </location>
</feature>
<feature type="transmembrane region" description="Helical; Name=6" evidence="1">
    <location>
        <begin position="250"/>
        <end position="271"/>
    </location>
</feature>
<feature type="topological domain" description="Extracellular" evidence="8">
    <location>
        <begin position="272"/>
        <end position="283"/>
    </location>
</feature>
<feature type="transmembrane region" description="Helical; Name=7" evidence="1">
    <location>
        <begin position="284"/>
        <end position="305"/>
    </location>
</feature>
<feature type="topological domain" description="Cytoplasmic" evidence="8">
    <location>
        <begin position="306"/>
        <end position="348"/>
    </location>
</feature>
<feature type="region of interest" description="Disordered" evidence="7">
    <location>
        <begin position="327"/>
        <end position="348"/>
    </location>
</feature>
<feature type="short sequence motif" description="'Ionic lock' involved in activated form stabilization" evidence="1">
    <location>
        <begin position="131"/>
        <end position="133"/>
    </location>
</feature>
<feature type="compositionally biased region" description="Low complexity" evidence="7">
    <location>
        <begin position="332"/>
        <end position="348"/>
    </location>
</feature>
<feature type="site" description="Plays an important role in the conformation switch to the active conformation" evidence="1">
    <location>
        <position position="110"/>
    </location>
</feature>
<feature type="modified residue" description="N6-(retinylidene)lysine" evidence="1">
    <location>
        <position position="293"/>
    </location>
</feature>
<feature type="lipid moiety-binding region" description="S-palmitoyl cysteine" evidence="1">
    <location>
        <position position="320"/>
    </location>
</feature>
<feature type="glycosylation site" description="N-linked (GlcNAc...) asparagine" evidence="5">
    <location>
        <position position="12"/>
    </location>
</feature>
<feature type="glycosylation site" description="N-linked (GlcNAc...) asparagine" evidence="5">
    <location>
        <position position="197"/>
    </location>
</feature>
<feature type="disulfide bond" evidence="6">
    <location>
        <begin position="107"/>
        <end position="184"/>
    </location>
</feature>
<feature type="non-terminal residue">
    <location>
        <position position="1"/>
    </location>
</feature>
<protein>
    <recommendedName>
        <fullName>Rhodopsin</fullName>
    </recommendedName>
</protein>
<accession>P79914</accession>
<sequence length="348" mass="39016">TEGPYFYVPMVNTTGIVRSPYEYPQYYLVNPAAFAILGAYMFFLIIVGFPVNFMTLYVTLEHKKLRTPLNYILLNLAVADLFMVIGGFTTTMYTSMHGYFVLGRLGCNLEGFFATLGGMISLWSLAVLAIERWVVVCKPISNFRFGENHAIMGVSLTWGMALACTVPPLVGWSRYIPEGMQCSCGIDYYTRAEGFNNETFVLYMFCCHFTVPLTIIFFCYGRLLCAVKEAAAAQQESETTQRAEREVTRMVVIMVIGFLVCWLPYASVAWFVFTHQGSEFGPLFMTIPAFFAKSSAIYNPMIYICMNKQFRHCMITTLFCGKNPFEGEEEGASSTKTEASSASSVSPA</sequence>
<dbReference type="EMBL" id="U57546">
    <property type="protein sequence ID" value="AAB39536.1"/>
    <property type="molecule type" value="mRNA"/>
</dbReference>
<dbReference type="SMR" id="P79914"/>
<dbReference type="GlyCosmos" id="P79914">
    <property type="glycosylation" value="2 sites, No reported glycans"/>
</dbReference>
<dbReference type="GO" id="GO:0016020">
    <property type="term" value="C:membrane"/>
    <property type="evidence" value="ECO:0000250"/>
    <property type="project" value="UniProtKB"/>
</dbReference>
<dbReference type="GO" id="GO:0097381">
    <property type="term" value="C:photoreceptor disc membrane"/>
    <property type="evidence" value="ECO:0000250"/>
    <property type="project" value="UniProtKB"/>
</dbReference>
<dbReference type="GO" id="GO:0005886">
    <property type="term" value="C:plasma membrane"/>
    <property type="evidence" value="ECO:0000250"/>
    <property type="project" value="UniProtKB"/>
</dbReference>
<dbReference type="GO" id="GO:0005502">
    <property type="term" value="F:11-cis retinal binding"/>
    <property type="evidence" value="ECO:0000250"/>
    <property type="project" value="UniProtKB"/>
</dbReference>
<dbReference type="GO" id="GO:0008020">
    <property type="term" value="F:G protein-coupled photoreceptor activity"/>
    <property type="evidence" value="ECO:0000250"/>
    <property type="project" value="UniProtKB"/>
</dbReference>
<dbReference type="GO" id="GO:0016038">
    <property type="term" value="P:absorption of visible light"/>
    <property type="evidence" value="ECO:0000250"/>
    <property type="project" value="UniProtKB"/>
</dbReference>
<dbReference type="GO" id="GO:0016056">
    <property type="term" value="P:G protein-coupled opsin signaling pathway"/>
    <property type="evidence" value="ECO:0000250"/>
    <property type="project" value="UniProtKB"/>
</dbReference>
<dbReference type="GO" id="GO:0007601">
    <property type="term" value="P:visual perception"/>
    <property type="evidence" value="ECO:0007669"/>
    <property type="project" value="UniProtKB-KW"/>
</dbReference>
<dbReference type="CDD" id="cd15080">
    <property type="entry name" value="7tmA_MWS_opsin"/>
    <property type="match status" value="1"/>
</dbReference>
<dbReference type="FunFam" id="1.20.1070.10:FF:000018">
    <property type="entry name" value="Rhodopsin"/>
    <property type="match status" value="1"/>
</dbReference>
<dbReference type="Gene3D" id="1.20.1070.10">
    <property type="entry name" value="Rhodopsin 7-helix transmembrane proteins"/>
    <property type="match status" value="1"/>
</dbReference>
<dbReference type="InterPro" id="IPR050125">
    <property type="entry name" value="GPCR_opsins"/>
</dbReference>
<dbReference type="InterPro" id="IPR000276">
    <property type="entry name" value="GPCR_Rhodpsn"/>
</dbReference>
<dbReference type="InterPro" id="IPR017452">
    <property type="entry name" value="GPCR_Rhodpsn_7TM"/>
</dbReference>
<dbReference type="InterPro" id="IPR001760">
    <property type="entry name" value="Opsin"/>
</dbReference>
<dbReference type="InterPro" id="IPR027430">
    <property type="entry name" value="Retinal_BS"/>
</dbReference>
<dbReference type="InterPro" id="IPR000732">
    <property type="entry name" value="Rhodopsin"/>
</dbReference>
<dbReference type="InterPro" id="IPR019477">
    <property type="entry name" value="Rhodopsin_N"/>
</dbReference>
<dbReference type="PANTHER" id="PTHR24240">
    <property type="entry name" value="OPSIN"/>
    <property type="match status" value="1"/>
</dbReference>
<dbReference type="Pfam" id="PF00001">
    <property type="entry name" value="7tm_1"/>
    <property type="match status" value="1"/>
</dbReference>
<dbReference type="Pfam" id="PF10413">
    <property type="entry name" value="Rhodopsin_N"/>
    <property type="match status" value="1"/>
</dbReference>
<dbReference type="PRINTS" id="PR00237">
    <property type="entry name" value="GPCRRHODOPSN"/>
</dbReference>
<dbReference type="PRINTS" id="PR00238">
    <property type="entry name" value="OPSIN"/>
</dbReference>
<dbReference type="PRINTS" id="PR00579">
    <property type="entry name" value="RHODOPSIN"/>
</dbReference>
<dbReference type="SUPFAM" id="SSF81321">
    <property type="entry name" value="Family A G protein-coupled receptor-like"/>
    <property type="match status" value="1"/>
</dbReference>
<dbReference type="PROSITE" id="PS00237">
    <property type="entry name" value="G_PROTEIN_RECEP_F1_1"/>
    <property type="match status" value="1"/>
</dbReference>
<dbReference type="PROSITE" id="PS50262">
    <property type="entry name" value="G_PROTEIN_RECEP_F1_2"/>
    <property type="match status" value="1"/>
</dbReference>
<dbReference type="PROSITE" id="PS00238">
    <property type="entry name" value="OPSIN"/>
    <property type="match status" value="1"/>
</dbReference>
<keyword id="KW-0966">Cell projection</keyword>
<keyword id="KW-0157">Chromophore</keyword>
<keyword id="KW-1015">Disulfide bond</keyword>
<keyword id="KW-0297">G-protein coupled receptor</keyword>
<keyword id="KW-0325">Glycoprotein</keyword>
<keyword id="KW-0449">Lipoprotein</keyword>
<keyword id="KW-0472">Membrane</keyword>
<keyword id="KW-0564">Palmitate</keyword>
<keyword id="KW-0597">Phosphoprotein</keyword>
<keyword id="KW-0600">Photoreceptor protein</keyword>
<keyword id="KW-0675">Receptor</keyword>
<keyword id="KW-0681">Retinal protein</keyword>
<keyword id="KW-0716">Sensory transduction</keyword>
<keyword id="KW-0807">Transducer</keyword>
<keyword id="KW-0812">Transmembrane</keyword>
<keyword id="KW-1133">Transmembrane helix</keyword>
<keyword id="KW-0844">Vision</keyword>
<name>OPSD_SARXA</name>
<reference key="1">
    <citation type="submission" date="1997-01" db="EMBL/GenBank/DDBJ databases">
        <title>Molecular phylogeny of 11 holocentrid fishes (Order Beryciformes) inferred from rhodopsin cDNA and cytochrome b.</title>
        <authorList>
            <person name="Toller W.W."/>
            <person name="Moses K."/>
            <person name="McFall-Ngai M.J."/>
        </authorList>
    </citation>
    <scope>NUCLEOTIDE SEQUENCE [MRNA]</scope>
    <source>
        <tissue>Eye</tissue>
    </source>
</reference>